<proteinExistence type="inferred from homology"/>
<organism>
    <name type="scientific">Oryzias latipes</name>
    <name type="common">Japanese rice fish</name>
    <name type="synonym">Japanese killifish</name>
    <dbReference type="NCBI Taxonomy" id="8090"/>
    <lineage>
        <taxon>Eukaryota</taxon>
        <taxon>Metazoa</taxon>
        <taxon>Chordata</taxon>
        <taxon>Craniata</taxon>
        <taxon>Vertebrata</taxon>
        <taxon>Euteleostomi</taxon>
        <taxon>Actinopterygii</taxon>
        <taxon>Neopterygii</taxon>
        <taxon>Teleostei</taxon>
        <taxon>Neoteleostei</taxon>
        <taxon>Acanthomorphata</taxon>
        <taxon>Ovalentaria</taxon>
        <taxon>Atherinomorphae</taxon>
        <taxon>Beloniformes</taxon>
        <taxon>Adrianichthyidae</taxon>
        <taxon>Oryziinae</taxon>
        <taxon>Oryzias</taxon>
    </lineage>
</organism>
<dbReference type="EC" id="5.3.1.1" evidence="2"/>
<dbReference type="EC" id="4.2.3.3" evidence="1"/>
<dbReference type="EMBL" id="AB183488">
    <property type="protein sequence ID" value="BAD93251.1"/>
    <property type="molecule type" value="Genomic_DNA"/>
</dbReference>
<dbReference type="SMR" id="Q589R5"/>
<dbReference type="FunCoup" id="Q589R5">
    <property type="interactions" value="1297"/>
</dbReference>
<dbReference type="STRING" id="8090.ENSORLP00000008028"/>
<dbReference type="Ensembl" id="ENSORLT00020005595.1">
    <property type="protein sequence ID" value="ENSORLP00020024978.1"/>
    <property type="gene ID" value="ENSORLG00020006676.1"/>
</dbReference>
<dbReference type="eggNOG" id="KOG1643">
    <property type="taxonomic scope" value="Eukaryota"/>
</dbReference>
<dbReference type="InParanoid" id="Q589R5"/>
<dbReference type="UniPathway" id="UPA00109">
    <property type="reaction ID" value="UER00189"/>
</dbReference>
<dbReference type="UniPathway" id="UPA00138"/>
<dbReference type="Proteomes" id="UP000001038">
    <property type="component" value="Unplaced"/>
</dbReference>
<dbReference type="Proteomes" id="UP000265180">
    <property type="component" value="Chromosome 11"/>
</dbReference>
<dbReference type="Proteomes" id="UP000265200">
    <property type="component" value="Unplaced"/>
</dbReference>
<dbReference type="GO" id="GO:0005829">
    <property type="term" value="C:cytosol"/>
    <property type="evidence" value="ECO:0000318"/>
    <property type="project" value="GO_Central"/>
</dbReference>
<dbReference type="GO" id="GO:0008929">
    <property type="term" value="F:methylglyoxal synthase activity"/>
    <property type="evidence" value="ECO:0000250"/>
    <property type="project" value="UniProtKB"/>
</dbReference>
<dbReference type="GO" id="GO:0042803">
    <property type="term" value="F:protein homodimerization activity"/>
    <property type="evidence" value="ECO:0000250"/>
    <property type="project" value="UniProtKB"/>
</dbReference>
<dbReference type="GO" id="GO:0004807">
    <property type="term" value="F:triose-phosphate isomerase activity"/>
    <property type="evidence" value="ECO:0000250"/>
    <property type="project" value="UniProtKB"/>
</dbReference>
<dbReference type="GO" id="GO:0006094">
    <property type="term" value="P:gluconeogenesis"/>
    <property type="evidence" value="ECO:0000318"/>
    <property type="project" value="GO_Central"/>
</dbReference>
<dbReference type="GO" id="GO:0046166">
    <property type="term" value="P:glyceraldehyde-3-phosphate biosynthetic process"/>
    <property type="evidence" value="ECO:0000250"/>
    <property type="project" value="UniProtKB"/>
</dbReference>
<dbReference type="GO" id="GO:0019563">
    <property type="term" value="P:glycerol catabolic process"/>
    <property type="evidence" value="ECO:0000318"/>
    <property type="project" value="GO_Central"/>
</dbReference>
<dbReference type="GO" id="GO:0006096">
    <property type="term" value="P:glycolytic process"/>
    <property type="evidence" value="ECO:0000318"/>
    <property type="project" value="GO_Central"/>
</dbReference>
<dbReference type="GO" id="GO:0019242">
    <property type="term" value="P:methylglyoxal biosynthetic process"/>
    <property type="evidence" value="ECO:0000250"/>
    <property type="project" value="UniProtKB"/>
</dbReference>
<dbReference type="CDD" id="cd00311">
    <property type="entry name" value="TIM"/>
    <property type="match status" value="1"/>
</dbReference>
<dbReference type="FunFam" id="3.20.20.70:FF:000025">
    <property type="entry name" value="Triosephosphate isomerase"/>
    <property type="match status" value="1"/>
</dbReference>
<dbReference type="Gene3D" id="3.20.20.70">
    <property type="entry name" value="Aldolase class I"/>
    <property type="match status" value="1"/>
</dbReference>
<dbReference type="HAMAP" id="MF_00147_B">
    <property type="entry name" value="TIM_B"/>
    <property type="match status" value="1"/>
</dbReference>
<dbReference type="InterPro" id="IPR013785">
    <property type="entry name" value="Aldolase_TIM"/>
</dbReference>
<dbReference type="InterPro" id="IPR035990">
    <property type="entry name" value="TIM_sf"/>
</dbReference>
<dbReference type="InterPro" id="IPR022896">
    <property type="entry name" value="TrioseP_Isoase_bac/euk"/>
</dbReference>
<dbReference type="InterPro" id="IPR000652">
    <property type="entry name" value="Triosephosphate_isomerase"/>
</dbReference>
<dbReference type="InterPro" id="IPR020861">
    <property type="entry name" value="Triosephosphate_isomerase_AS"/>
</dbReference>
<dbReference type="NCBIfam" id="TIGR00419">
    <property type="entry name" value="tim"/>
    <property type="match status" value="1"/>
</dbReference>
<dbReference type="PANTHER" id="PTHR21139">
    <property type="entry name" value="TRIOSEPHOSPHATE ISOMERASE"/>
    <property type="match status" value="1"/>
</dbReference>
<dbReference type="PANTHER" id="PTHR21139:SF17">
    <property type="entry name" value="TRIOSEPHOSPHATE ISOMERASE A"/>
    <property type="match status" value="1"/>
</dbReference>
<dbReference type="Pfam" id="PF00121">
    <property type="entry name" value="TIM"/>
    <property type="match status" value="1"/>
</dbReference>
<dbReference type="SUPFAM" id="SSF51351">
    <property type="entry name" value="Triosephosphate isomerase (TIM)"/>
    <property type="match status" value="1"/>
</dbReference>
<dbReference type="PROSITE" id="PS00171">
    <property type="entry name" value="TIM_1"/>
    <property type="match status" value="1"/>
</dbReference>
<dbReference type="PROSITE" id="PS51440">
    <property type="entry name" value="TIM_2"/>
    <property type="match status" value="1"/>
</dbReference>
<sequence>MAQRRFFVGGNWKMNGNKESLEELMSTLNTASLHEDTEVVCAAPSIYLDFARSGLDSRISVAAQNCYKVAKGAFTGEISPAMIKDCGADWVILGHSERRHVFGENDELIGQKVAHALESDLSVIACIGEKLEEREAGTTEDVIFAQTQVIAENVMDWEKVVLAYEPVWAIGTGKTATPEQAQEVHEKLRAWFRANISEEVSDSLRIIYGGSVTAANCRELASQTDVDGFLVGGASLKPEFIDIINARA</sequence>
<protein>
    <recommendedName>
        <fullName>Triosephosphate isomerase</fullName>
        <shortName>TIM</shortName>
        <ecNumber evidence="2">5.3.1.1</ecNumber>
    </recommendedName>
    <alternativeName>
        <fullName evidence="1">Methylglyoxal synthase</fullName>
        <ecNumber evidence="1">4.2.3.3</ecNumber>
    </alternativeName>
    <alternativeName>
        <fullName>Triose-phosphate isomerase</fullName>
    </alternativeName>
</protein>
<comment type="function">
    <text evidence="1">Triosephosphate isomerase is an extremely efficient metabolic enzyme that catalyzes the interconversion between dihydroxyacetone phosphate (DHAP) and D-glyceraldehyde-3-phosphate (G3P) in glycolysis and gluconeogenesis.</text>
</comment>
<comment type="function">
    <text evidence="1">It is also responsible for the non-negligible production of methylglyoxal a reactive cytotoxic side-product that modifies and can alter proteins, DNA and lipids.</text>
</comment>
<comment type="catalytic activity">
    <reaction evidence="2">
        <text>D-glyceraldehyde 3-phosphate = dihydroxyacetone phosphate</text>
        <dbReference type="Rhea" id="RHEA:18585"/>
        <dbReference type="ChEBI" id="CHEBI:57642"/>
        <dbReference type="ChEBI" id="CHEBI:59776"/>
        <dbReference type="EC" id="5.3.1.1"/>
    </reaction>
</comment>
<comment type="catalytic activity">
    <reaction evidence="1">
        <text>dihydroxyacetone phosphate = methylglyoxal + phosphate</text>
        <dbReference type="Rhea" id="RHEA:17937"/>
        <dbReference type="ChEBI" id="CHEBI:17158"/>
        <dbReference type="ChEBI" id="CHEBI:43474"/>
        <dbReference type="ChEBI" id="CHEBI:57642"/>
        <dbReference type="EC" id="4.2.3.3"/>
    </reaction>
</comment>
<comment type="pathway">
    <text evidence="2">Carbohydrate degradation; glycolysis; D-glyceraldehyde 3-phosphate from glycerone phosphate: step 1/1.</text>
</comment>
<comment type="pathway">
    <text evidence="2">Carbohydrate biosynthesis; gluconeogenesis.</text>
</comment>
<comment type="subunit">
    <text evidence="2">Homodimer.</text>
</comment>
<comment type="subcellular location">
    <subcellularLocation>
        <location evidence="2">Cytoplasm</location>
    </subcellularLocation>
</comment>
<comment type="similarity">
    <text evidence="3">Belongs to the triosephosphate isomerase family.</text>
</comment>
<gene>
    <name type="primary">tpi1</name>
    <name type="synonym">tpi</name>
</gene>
<keyword id="KW-0963">Cytoplasm</keyword>
<keyword id="KW-0312">Gluconeogenesis</keyword>
<keyword id="KW-0324">Glycolysis</keyword>
<keyword id="KW-0413">Isomerase</keyword>
<keyword id="KW-0456">Lyase</keyword>
<keyword id="KW-1185">Reference proteome</keyword>
<reference key="1">
    <citation type="submission" date="2004-07" db="EMBL/GenBank/DDBJ databases">
        <title>Nucleotide sequence of the MHC class I region of the inbred medaka HNI strain.</title>
        <authorList>
            <person name="Tsukamoto K."/>
            <person name="Hayashi S."/>
            <person name="Matsuo M.Y."/>
            <person name="Nonaka M.I."/>
            <person name="Kondo M."/>
            <person name="Shima A."/>
            <person name="Asakawa S."/>
            <person name="Shimizu N."/>
            <person name="Nonaka M."/>
        </authorList>
    </citation>
    <scope>NUCLEOTIDE SEQUENCE [LARGE SCALE GENOMIC DNA]</scope>
    <source>
        <strain>HNI</strain>
    </source>
</reference>
<evidence type="ECO:0000250" key="1">
    <source>
        <dbReference type="UniProtKB" id="P00939"/>
    </source>
</evidence>
<evidence type="ECO:0000255" key="2">
    <source>
        <dbReference type="PROSITE-ProRule" id="PRU10127"/>
    </source>
</evidence>
<evidence type="ECO:0000305" key="3"/>
<name>TPIS_ORYLA</name>
<accession>Q589R5</accession>
<feature type="chain" id="PRO_0000090123" description="Triosephosphate isomerase">
    <location>
        <begin position="1"/>
        <end position="248"/>
    </location>
</feature>
<feature type="active site" description="Electrophile" evidence="2">
    <location>
        <position position="95"/>
    </location>
</feature>
<feature type="active site" description="Proton acceptor" evidence="2">
    <location>
        <position position="165"/>
    </location>
</feature>
<feature type="binding site" evidence="2">
    <location>
        <position position="11"/>
    </location>
    <ligand>
        <name>substrate</name>
    </ligand>
</feature>
<feature type="binding site" evidence="2">
    <location>
        <position position="13"/>
    </location>
    <ligand>
        <name>substrate</name>
    </ligand>
</feature>